<evidence type="ECO:0000250" key="1"/>
<evidence type="ECO:0000255" key="2"/>
<evidence type="ECO:0000269" key="3">
    <source>
    </source>
</evidence>
<evidence type="ECO:0000269" key="4">
    <source>
    </source>
</evidence>
<evidence type="ECO:0000269" key="5">
    <source>
    </source>
</evidence>
<evidence type="ECO:0000269" key="6">
    <source>
    </source>
</evidence>
<evidence type="ECO:0000269" key="7">
    <source>
    </source>
</evidence>
<evidence type="ECO:0000269" key="8">
    <source>
    </source>
</evidence>
<evidence type="ECO:0000269" key="9">
    <source>
    </source>
</evidence>
<evidence type="ECO:0000269" key="10">
    <source>
    </source>
</evidence>
<evidence type="ECO:0000269" key="11">
    <source>
    </source>
</evidence>
<evidence type="ECO:0000305" key="12"/>
<feature type="chain" id="PRO_0000422954" description="RNA polymerase sigma factor SigF">
    <location>
        <begin position="1"/>
        <end position="261"/>
    </location>
</feature>
<feature type="DNA-binding region" description="H-T-H motif" evidence="2">
    <location>
        <begin position="231"/>
        <end position="250"/>
    </location>
</feature>
<feature type="region of interest" description="Sigma-70 factor domain-2">
    <location>
        <begin position="43"/>
        <end position="112"/>
    </location>
</feature>
<feature type="region of interest" description="Sigma-70 factor domain-3">
    <location>
        <begin position="123"/>
        <end position="189"/>
    </location>
</feature>
<feature type="region of interest" description="Sigma-70 factor domain-4">
    <location>
        <begin position="209"/>
        <end position="258"/>
    </location>
</feature>
<feature type="short sequence motif" description="Interaction with polymerase core subunit RpoC" evidence="1">
    <location>
        <begin position="67"/>
        <end position="70"/>
    </location>
</feature>
<feature type="sequence conflict" description="In Ref. 1; AAC44103." evidence="12" ref="1">
    <original>L</original>
    <variation>V</variation>
    <location>
        <position position="248"/>
    </location>
</feature>
<keyword id="KW-0002">3D-structure</keyword>
<keyword id="KW-0238">DNA-binding</keyword>
<keyword id="KW-1185">Reference proteome</keyword>
<keyword id="KW-0731">Sigma factor</keyword>
<keyword id="KW-0804">Transcription</keyword>
<keyword id="KW-0805">Transcription regulation</keyword>
<organism>
    <name type="scientific">Mycobacterium tuberculosis (strain ATCC 25618 / H37Rv)</name>
    <dbReference type="NCBI Taxonomy" id="83332"/>
    <lineage>
        <taxon>Bacteria</taxon>
        <taxon>Bacillati</taxon>
        <taxon>Actinomycetota</taxon>
        <taxon>Actinomycetes</taxon>
        <taxon>Mycobacteriales</taxon>
        <taxon>Mycobacteriaceae</taxon>
        <taxon>Mycobacterium</taxon>
        <taxon>Mycobacterium tuberculosis complex</taxon>
    </lineage>
</organism>
<comment type="function">
    <text evidence="5 9 10 11">Sigma factors are initiation factors that promote the attachment of RNA polymerase to specific initiation sites and are then released. Held in an inactive form by a cognate anti-sigma factor RsbW (UsfX) until released. Increased expression decreases growth rate, and after 3 days increases the expression of 51 loci encoding 33 protein-coding genes as well as some non-coding RNA (PubMed:22307756).</text>
</comment>
<comment type="subunit">
    <text evidence="5 7 8">Monomer. Interacts transiently with the RNA polymerase catalytic core formed by RpoA, RpoB, RpoC and RpoZ (2 alpha, 1 beta, 1 beta' and 1 omega subunit) to form the RNA polymerase holoenzyme that can initiate transcription. Interacts (via sigma-70 factor domain 4) with anti-sigma-F factor RsbW (UsfX) with a possible 2:1 RbsW:SigF stoichiometry, which inhibits SigF activity.</text>
</comment>
<comment type="induction">
    <text evidence="3 4">Constitutively expressed at a low level under all conditions tested, including stationary phase and several stresses. 3-fold induced during starvation (PubMed:11929527). Positively controls expression of its own operon (rsbW-sigF).</text>
</comment>
<comment type="domain">
    <text evidence="1">The sigma-70 factor domain-2 mediates sequence-specific interaction with the -10 element in promoter DNA, and plays an important role in melting the double-stranded DNA and the formation of the transcription bubble. The sigma-70 factor domain-2 mediates interaction with the RNA polymerase subunits RpoB and RpoC (By similarity).</text>
</comment>
<comment type="domain">
    <text evidence="1">The sigma-70 factor domain-4 contains a helix-turn-helix (H-T-H) motif that mediates interaction with the -35 element in promoter DNA. The domain also mediates interaction with the RNA polymerase subunit RpoA. Interactions between sigma-70 factor domain-4 and anti-sigma factors prevents interaction of sigma factors with the RNA polymerase catalytic core (By similarity).</text>
</comment>
<comment type="disruption phenotype">
    <text evidence="6 9">Infected guinea pigs mutant and wild-type bacteria grow comparably (PubMed:16735723). A double rsbW-sigF disruption shows no effect in the presence or absence of rifampicin (PubMed:20729364).</text>
</comment>
<comment type="similarity">
    <text evidence="12">Belongs to the sigma-70 factor family.</text>
</comment>
<gene>
    <name type="primary">sigF</name>
    <name type="ordered locus">Rv3286c</name>
</gene>
<proteinExistence type="evidence at protein level"/>
<accession>P9WGI3</accession>
<accession>F2GKV9</accession>
<accession>Q50547</accession>
<accession>Q798K1</accession>
<accession>Q7D5S2</accession>
<sequence>MTARAAGGSASRANEYADVPEMFRELVGLPAGSPEFQRHRDKIVQRCLPLADHIARRFEGRGEPRDDLIQVARVGLVNAAVRFDVKTGSDFVSFAVPTIMGEVRRHFRDNSWSVKVPRRLKELHLRLGTATADLSQRLGRAPSASELAAELGMDRAEVIEGLLAGSSYHTLSIDSGGGSDDDARAITDTLGDVDAGLDQIENREVLRPLLEALPERERTVLVLRFFDSMTQTQIAERVGISQMHVSRLLAKSLARLRDQLE</sequence>
<dbReference type="EMBL" id="U41061">
    <property type="protein sequence ID" value="AAC44103.1"/>
    <property type="molecule type" value="Genomic_DNA"/>
</dbReference>
<dbReference type="EMBL" id="AL123456">
    <property type="protein sequence ID" value="CCP46105.1"/>
    <property type="molecule type" value="Genomic_DNA"/>
</dbReference>
<dbReference type="RefSeq" id="NP_217803.1">
    <property type="nucleotide sequence ID" value="NC_000962.3"/>
</dbReference>
<dbReference type="RefSeq" id="WP_003417158.1">
    <property type="nucleotide sequence ID" value="NZ_NVQJ01000003.1"/>
</dbReference>
<dbReference type="PDB" id="8JZT">
    <property type="method" value="X-ray"/>
    <property type="resolution" value="1.94 A"/>
    <property type="chains" value="A/C/E=193-261"/>
</dbReference>
<dbReference type="PDBsum" id="8JZT"/>
<dbReference type="SMR" id="P9WGI3"/>
<dbReference type="FunCoup" id="P9WGI3">
    <property type="interactions" value="2"/>
</dbReference>
<dbReference type="IntAct" id="P9WGI3">
    <property type="interactions" value="5"/>
</dbReference>
<dbReference type="STRING" id="83332.Rv3286c"/>
<dbReference type="PaxDb" id="83332-Rv3286c"/>
<dbReference type="DNASU" id="888727"/>
<dbReference type="GeneID" id="45427282"/>
<dbReference type="GeneID" id="888727"/>
<dbReference type="KEGG" id="mtu:Rv3286c"/>
<dbReference type="KEGG" id="mtv:RVBD_3286c"/>
<dbReference type="TubercuList" id="Rv3286c"/>
<dbReference type="eggNOG" id="COG1191">
    <property type="taxonomic scope" value="Bacteria"/>
</dbReference>
<dbReference type="InParanoid" id="P9WGI3"/>
<dbReference type="OrthoDB" id="9804285at2"/>
<dbReference type="PhylomeDB" id="P9WGI3"/>
<dbReference type="Proteomes" id="UP000001584">
    <property type="component" value="Chromosome"/>
</dbReference>
<dbReference type="GO" id="GO:0003677">
    <property type="term" value="F:DNA binding"/>
    <property type="evidence" value="ECO:0007669"/>
    <property type="project" value="UniProtKB-KW"/>
</dbReference>
<dbReference type="GO" id="GO:0043175">
    <property type="term" value="F:RNA polymerase core enzyme binding"/>
    <property type="evidence" value="ECO:0000314"/>
    <property type="project" value="MTBBASE"/>
</dbReference>
<dbReference type="GO" id="GO:0016987">
    <property type="term" value="F:sigma factor activity"/>
    <property type="evidence" value="ECO:0000316"/>
    <property type="project" value="MTBBASE"/>
</dbReference>
<dbReference type="GO" id="GO:0070417">
    <property type="term" value="P:cellular response to cold"/>
    <property type="evidence" value="ECO:0000270"/>
    <property type="project" value="MTBBASE"/>
</dbReference>
<dbReference type="GO" id="GO:0006995">
    <property type="term" value="P:cellular response to nitrogen starvation"/>
    <property type="evidence" value="ECO:0000270"/>
    <property type="project" value="MTBBASE"/>
</dbReference>
<dbReference type="GO" id="GO:0006352">
    <property type="term" value="P:DNA-templated transcription initiation"/>
    <property type="evidence" value="ECO:0007669"/>
    <property type="project" value="InterPro"/>
</dbReference>
<dbReference type="GO" id="GO:0006629">
    <property type="term" value="P:lipid metabolic process"/>
    <property type="evidence" value="ECO:0000315"/>
    <property type="project" value="MTBBASE"/>
</dbReference>
<dbReference type="GO" id="GO:0045893">
    <property type="term" value="P:positive regulation of DNA-templated transcription"/>
    <property type="evidence" value="ECO:0000314"/>
    <property type="project" value="MTBBASE"/>
</dbReference>
<dbReference type="GO" id="GO:0006355">
    <property type="term" value="P:regulation of DNA-templated transcription"/>
    <property type="evidence" value="ECO:0000318"/>
    <property type="project" value="GO_Central"/>
</dbReference>
<dbReference type="GO" id="GO:0034059">
    <property type="term" value="P:response to anoxia"/>
    <property type="evidence" value="ECO:0000315"/>
    <property type="project" value="MTBBASE"/>
</dbReference>
<dbReference type="GO" id="GO:0046677">
    <property type="term" value="P:response to antibiotic"/>
    <property type="evidence" value="ECO:0000315"/>
    <property type="project" value="MTBBASE"/>
</dbReference>
<dbReference type="GO" id="GO:0009409">
    <property type="term" value="P:response to cold"/>
    <property type="evidence" value="ECO:0000315"/>
    <property type="project" value="MTBBASE"/>
</dbReference>
<dbReference type="GO" id="GO:0006979">
    <property type="term" value="P:response to oxidative stress"/>
    <property type="evidence" value="ECO:0000315"/>
    <property type="project" value="MTBBASE"/>
</dbReference>
<dbReference type="CDD" id="cd06171">
    <property type="entry name" value="Sigma70_r4"/>
    <property type="match status" value="1"/>
</dbReference>
<dbReference type="FunFam" id="1.20.120.1810:FF:000007">
    <property type="entry name" value="RNA polymerase sigma factor SigF"/>
    <property type="match status" value="1"/>
</dbReference>
<dbReference type="Gene3D" id="1.20.120.1810">
    <property type="match status" value="1"/>
</dbReference>
<dbReference type="Gene3D" id="1.10.10.10">
    <property type="entry name" value="Winged helix-like DNA-binding domain superfamily/Winged helix DNA-binding domain"/>
    <property type="match status" value="2"/>
</dbReference>
<dbReference type="InterPro" id="IPR014284">
    <property type="entry name" value="RNA_pol_sigma-70_dom"/>
</dbReference>
<dbReference type="InterPro" id="IPR014322">
    <property type="entry name" value="RNA_pol_sigma-B/F/G"/>
</dbReference>
<dbReference type="InterPro" id="IPR000943">
    <property type="entry name" value="RNA_pol_sigma70"/>
</dbReference>
<dbReference type="InterPro" id="IPR007627">
    <property type="entry name" value="RNA_pol_sigma70_r2"/>
</dbReference>
<dbReference type="InterPro" id="IPR007624">
    <property type="entry name" value="RNA_pol_sigma70_r3"/>
</dbReference>
<dbReference type="InterPro" id="IPR007630">
    <property type="entry name" value="RNA_pol_sigma70_r4"/>
</dbReference>
<dbReference type="InterPro" id="IPR013325">
    <property type="entry name" value="RNA_pol_sigma_r2"/>
</dbReference>
<dbReference type="InterPro" id="IPR013324">
    <property type="entry name" value="RNA_pol_sigma_r3/r4-like"/>
</dbReference>
<dbReference type="InterPro" id="IPR036388">
    <property type="entry name" value="WH-like_DNA-bd_sf"/>
</dbReference>
<dbReference type="NCBIfam" id="NF005514">
    <property type="entry name" value="PRK07122.1"/>
    <property type="match status" value="1"/>
</dbReference>
<dbReference type="NCBIfam" id="TIGR02980">
    <property type="entry name" value="SigBFG"/>
    <property type="match status" value="1"/>
</dbReference>
<dbReference type="NCBIfam" id="TIGR02937">
    <property type="entry name" value="sigma70-ECF"/>
    <property type="match status" value="1"/>
</dbReference>
<dbReference type="PANTHER" id="PTHR30385:SF4">
    <property type="entry name" value="RNA POLYMERASE SIGMA-E FACTOR"/>
    <property type="match status" value="1"/>
</dbReference>
<dbReference type="PANTHER" id="PTHR30385">
    <property type="entry name" value="SIGMA FACTOR F FLAGELLAR"/>
    <property type="match status" value="1"/>
</dbReference>
<dbReference type="Pfam" id="PF04542">
    <property type="entry name" value="Sigma70_r2"/>
    <property type="match status" value="1"/>
</dbReference>
<dbReference type="Pfam" id="PF04539">
    <property type="entry name" value="Sigma70_r3"/>
    <property type="match status" value="1"/>
</dbReference>
<dbReference type="Pfam" id="PF04545">
    <property type="entry name" value="Sigma70_r4"/>
    <property type="match status" value="1"/>
</dbReference>
<dbReference type="PRINTS" id="PR00046">
    <property type="entry name" value="SIGMA70FCT"/>
</dbReference>
<dbReference type="SUPFAM" id="SSF88946">
    <property type="entry name" value="Sigma2 domain of RNA polymerase sigma factors"/>
    <property type="match status" value="1"/>
</dbReference>
<dbReference type="SUPFAM" id="SSF88659">
    <property type="entry name" value="Sigma3 and sigma4 domains of RNA polymerase sigma factors"/>
    <property type="match status" value="2"/>
</dbReference>
<name>SIGF_MYCTU</name>
<reference key="1">
    <citation type="journal article" date="1996" name="Proc. Natl. Acad. Sci. U.S.A.">
        <title>A stationary-phase stress-response sigma factor from Mycobacterium tuberculosis.</title>
        <authorList>
            <person name="DeMaio J."/>
            <person name="Zhang Y."/>
            <person name="Ko C."/>
            <person name="Young D.B."/>
            <person name="Bishai W.R."/>
        </authorList>
    </citation>
    <scope>NUCLEOTIDE SEQUENCE [GENOMIC DNA]</scope>
    <source>
        <strain>ATCC 25618 / H37Rv</strain>
    </source>
</reference>
<reference key="2">
    <citation type="journal article" date="1998" name="Nature">
        <title>Deciphering the biology of Mycobacterium tuberculosis from the complete genome sequence.</title>
        <authorList>
            <person name="Cole S.T."/>
            <person name="Brosch R."/>
            <person name="Parkhill J."/>
            <person name="Garnier T."/>
            <person name="Churcher C.M."/>
            <person name="Harris D.E."/>
            <person name="Gordon S.V."/>
            <person name="Eiglmeier K."/>
            <person name="Gas S."/>
            <person name="Barry C.E. III"/>
            <person name="Tekaia F."/>
            <person name="Badcock K."/>
            <person name="Basham D."/>
            <person name="Brown D."/>
            <person name="Chillingworth T."/>
            <person name="Connor R."/>
            <person name="Davies R.M."/>
            <person name="Devlin K."/>
            <person name="Feltwell T."/>
            <person name="Gentles S."/>
            <person name="Hamlin N."/>
            <person name="Holroyd S."/>
            <person name="Hornsby T."/>
            <person name="Jagels K."/>
            <person name="Krogh A."/>
            <person name="McLean J."/>
            <person name="Moule S."/>
            <person name="Murphy L.D."/>
            <person name="Oliver S."/>
            <person name="Osborne J."/>
            <person name="Quail M.A."/>
            <person name="Rajandream M.A."/>
            <person name="Rogers J."/>
            <person name="Rutter S."/>
            <person name="Seeger K."/>
            <person name="Skelton S."/>
            <person name="Squares S."/>
            <person name="Squares R."/>
            <person name="Sulston J.E."/>
            <person name="Taylor K."/>
            <person name="Whitehead S."/>
            <person name="Barrell B.G."/>
        </authorList>
    </citation>
    <scope>NUCLEOTIDE SEQUENCE [LARGE SCALE GENOMIC DNA]</scope>
    <source>
        <strain>ATCC 25618 / H37Rv</strain>
    </source>
</reference>
<reference key="3">
    <citation type="journal article" date="1999" name="Mol. Microbiol.">
        <title>Differential expression of 10 sigma factor genes in Mycobacterium tuberculosis.</title>
        <authorList>
            <person name="Manganelli R."/>
            <person name="Dubnau E."/>
            <person name="Tyagi S."/>
            <person name="Kramer F.R."/>
            <person name="Smith I."/>
        </authorList>
    </citation>
    <scope>INDUCTION</scope>
    <source>
        <strain>ATCC 25618 / H37Rv</strain>
    </source>
</reference>
<reference key="4">
    <citation type="journal article" date="2002" name="Mol. Microbiol.">
        <title>Evaluation of a nutrient starvation model of Mycobacterium tuberculosis persistence by gene and protein expression profiling.</title>
        <authorList>
            <person name="Betts J.C."/>
            <person name="Lukey P.T."/>
            <person name="Robb L.C."/>
            <person name="McAdam R.A."/>
            <person name="Duncan K."/>
        </authorList>
    </citation>
    <scope>INDUCTION FOLLOWING STARVATION</scope>
    <source>
        <strain>ATCC 25618 / H37Rv / NCTC 7416</strain>
    </source>
</reference>
<reference key="5">
    <citation type="journal article" date="2002" name="Mol. Microbiol.">
        <title>Novel Mycobacterium tuberculosis anti-sigma factor antagonists control sigmaF activity by distinct mechanisms.</title>
        <authorList>
            <person name="Beaucher J."/>
            <person name="Rodrigue S."/>
            <person name="Jacques P.E."/>
            <person name="Smith I."/>
            <person name="Brzezinski R."/>
            <person name="Gaudreau L."/>
        </authorList>
    </citation>
    <scope>FUNCTION AS A SIGMA FACTOR</scope>
    <scope>REGULATION</scope>
    <scope>INTERACTION WITH RSBW</scope>
</reference>
<reference key="6">
    <citation type="journal article" date="2006" name="Microbiology">
        <title>Examination of Mycobacterium tuberculosis sigma factor mutants using low-dose aerosol infection of guinea pigs suggests a role for SigC in pathogenesis.</title>
        <authorList>
            <person name="Karls R.K."/>
            <person name="Guarner J."/>
            <person name="McMurray D.N."/>
            <person name="Birkness K.A."/>
            <person name="Quinn F.D."/>
        </authorList>
    </citation>
    <scope>DISRUPTION PHENOTYPE IN GUINEA PIGS</scope>
    <source>
        <strain>ATCC 25618 / H37Rv</strain>
    </source>
</reference>
<reference key="7">
    <citation type="journal article" date="2009" name="Biochim. Biophys. Acta">
        <title>Interactions of the M. tuberculosis UsfX with the cognate sigma factor SigF and the anti-anti sigma factor RsfA.</title>
        <authorList>
            <person name="Malik S.S."/>
            <person name="Luthra A."/>
            <person name="Ramachandran R."/>
        </authorList>
    </citation>
    <scope>SUBUNIT</scope>
    <scope>INTERACTION WITH RSBW</scope>
</reference>
<reference key="8">
    <citation type="journal article" date="2010" name="J. Bacteriol.">
        <title>Sigma factor F does not prevent rifampin inhibition of RNA polymerase or cause rifampin tolerance in Mycobacterium tuberculosis.</title>
        <authorList>
            <person name="Hartkoorn R.C."/>
            <person name="Sala C."/>
            <person name="Magnet S.J."/>
            <person name="Chen J.M."/>
            <person name="Pojer F."/>
            <person name="Cole S.T."/>
        </authorList>
    </citation>
    <scope>FUNCTION AS A SIGMA FACTOR</scope>
    <scope>DISRUPTION PHENOTYPE</scope>
    <source>
        <strain>ATCC 25618 / H37Rv</strain>
    </source>
</reference>
<reference key="9">
    <citation type="journal article" date="2010" name="Protein Expr. Purif.">
        <title>Over-expression and purification strategies for recombinant multi-protein oligomers: a case study of Mycobacterium tuberculosis sigma/anti-sigma factor protein complexes.</title>
        <authorList>
            <person name="Thakur K.G."/>
            <person name="Jaiswal R.K."/>
            <person name="Shukla J.K."/>
            <person name="Praveena T."/>
            <person name="Gopal B."/>
        </authorList>
    </citation>
    <scope>INTERACTION WITH RSBW</scope>
</reference>
<reference key="10">
    <citation type="journal article" date="2011" name="Mol. Cell. Proteomics">
        <title>Proteogenomic analysis of Mycobacterium tuberculosis by high resolution mass spectrometry.</title>
        <authorList>
            <person name="Kelkar D.S."/>
            <person name="Kumar D."/>
            <person name="Kumar P."/>
            <person name="Balakrishnan L."/>
            <person name="Muthusamy B."/>
            <person name="Yadav A.K."/>
            <person name="Shrivastava P."/>
            <person name="Marimuthu A."/>
            <person name="Anand S."/>
            <person name="Sundaram H."/>
            <person name="Kingsbury R."/>
            <person name="Harsha H.C."/>
            <person name="Nair B."/>
            <person name="Prasad T.S."/>
            <person name="Chauhan D.S."/>
            <person name="Katoch K."/>
            <person name="Katoch V.M."/>
            <person name="Kumar P."/>
            <person name="Chaerkady R."/>
            <person name="Ramachandran S."/>
            <person name="Dash D."/>
            <person name="Pandey A."/>
        </authorList>
    </citation>
    <scope>IDENTIFICATION BY MASS SPECTROMETRY [LARGE SCALE ANALYSIS]</scope>
    <source>
        <strain>ATCC 25618 / H37Rv</strain>
    </source>
</reference>
<reference key="11">
    <citation type="journal article" date="2012" name="J. Bacteriol.">
        <title>Genome-wide definition of the SigF regulon in Mycobacterium tuberculosis.</title>
        <authorList>
            <person name="Hartkoorn R.C."/>
            <person name="Sala C."/>
            <person name="Uplekar S."/>
            <person name="Busso P."/>
            <person name="Rougemont J."/>
            <person name="Cole S.T."/>
        </authorList>
    </citation>
    <scope>FUNCTION</scope>
    <scope>REGULON</scope>
    <source>
        <strain>ATCC 25618 / H37Rv</strain>
    </source>
</reference>
<reference key="12">
    <citation type="journal article" date="2012" name="Nucleic Acids Res.">
        <title>Mycobacterium tuberculosis RbpA protein is a new type of transcriptional activator that stabilizes the sigma A-containing RNA polymerase holoenzyme.</title>
        <authorList>
            <person name="Hu Y."/>
            <person name="Morichaud Z."/>
            <person name="Chen S."/>
            <person name="Leonetti J.P."/>
            <person name="Brodolin K."/>
        </authorList>
    </citation>
    <scope>FUNCTION AS A SIGMA FACTOR</scope>
    <source>
        <strain>ATCC 25618 / H37Rv</strain>
    </source>
</reference>
<protein>
    <recommendedName>
        <fullName>RNA polymerase sigma factor SigF</fullName>
        <shortName>Sigma factor SigF</shortName>
    </recommendedName>
    <alternativeName>
        <fullName>Alternative RNA polymerase sigma factor SigF</fullName>
    </alternativeName>
    <alternativeName>
        <fullName>RNA polymerase sigma-F factor</fullName>
        <shortName>Sigma-F factor</shortName>
    </alternativeName>
    <alternativeName>
        <fullName>Stress response/stationary phase sigma factor SigF</fullName>
    </alternativeName>
</protein>